<protein>
    <recommendedName>
        <fullName evidence="1">UDP-3-O-acyl-N-acetylglucosamine deacetylase</fullName>
        <shortName evidence="1">UDP-3-O-acyl-GlcNAc deacetylase</shortName>
        <ecNumber evidence="1">3.5.1.108</ecNumber>
    </recommendedName>
    <alternativeName>
        <fullName evidence="1">UDP-3-O-[R-3-hydroxymyristoyl]-N-acetylglucosamine deacetylase</fullName>
    </alternativeName>
</protein>
<evidence type="ECO:0000255" key="1">
    <source>
        <dbReference type="HAMAP-Rule" id="MF_00388"/>
    </source>
</evidence>
<reference key="1">
    <citation type="journal article" date="2010" name="PLoS ONE">
        <title>The complete genome sequence of Cupriavidus metallidurans strain CH34, a master survivalist in harsh and anthropogenic environments.</title>
        <authorList>
            <person name="Janssen P.J."/>
            <person name="Van Houdt R."/>
            <person name="Moors H."/>
            <person name="Monsieurs P."/>
            <person name="Morin N."/>
            <person name="Michaux A."/>
            <person name="Benotmane M.A."/>
            <person name="Leys N."/>
            <person name="Vallaeys T."/>
            <person name="Lapidus A."/>
            <person name="Monchy S."/>
            <person name="Medigue C."/>
            <person name="Taghavi S."/>
            <person name="McCorkle S."/>
            <person name="Dunn J."/>
            <person name="van der Lelie D."/>
            <person name="Mergeay M."/>
        </authorList>
    </citation>
    <scope>NUCLEOTIDE SEQUENCE [LARGE SCALE GENOMIC DNA]</scope>
    <source>
        <strain>ATCC 43123 / DSM 2839 / NBRC 102507 / CH34</strain>
    </source>
</reference>
<sequence>MLKQRTIKSLVKTVGIGLHSGRKVTLTLRPAPADTGIVFTRVDLPEAVEIHAAASAIGDTRLASVLQKDGARVSTVEHLMSACAGLGVDNLYVDVDAEEIPIMDGSAASFVFLLQSAGMEEQPAAKRFIRVKKAVEVRDGDKLARLEPFFGFKLAFTIDFRHPAVDKTGQTFTIDFADTSYVREIARARTFGFAHEVEALREMGLARGGSLDNAIVLDEHRMLNNEELRYGDEFVRHKILDAIGDLYVIGHPLIASYVAHKSGHGMNNQLLRALLADQEAYEFVTFDKVEEAPVAFLPQAQPAFA</sequence>
<organism>
    <name type="scientific">Cupriavidus metallidurans (strain ATCC 43123 / DSM 2839 / NBRC 102507 / CH34)</name>
    <name type="common">Ralstonia metallidurans</name>
    <dbReference type="NCBI Taxonomy" id="266264"/>
    <lineage>
        <taxon>Bacteria</taxon>
        <taxon>Pseudomonadati</taxon>
        <taxon>Pseudomonadota</taxon>
        <taxon>Betaproteobacteria</taxon>
        <taxon>Burkholderiales</taxon>
        <taxon>Burkholderiaceae</taxon>
        <taxon>Cupriavidus</taxon>
    </lineage>
</organism>
<proteinExistence type="inferred from homology"/>
<dbReference type="EC" id="3.5.1.108" evidence="1"/>
<dbReference type="EMBL" id="CP000352">
    <property type="protein sequence ID" value="ABF09993.1"/>
    <property type="molecule type" value="Genomic_DNA"/>
</dbReference>
<dbReference type="RefSeq" id="WP_008650320.1">
    <property type="nucleotide sequence ID" value="NC_007973.1"/>
</dbReference>
<dbReference type="SMR" id="Q1LIN3"/>
<dbReference type="STRING" id="266264.Rmet_3121"/>
<dbReference type="GeneID" id="60820503"/>
<dbReference type="KEGG" id="rme:Rmet_3121"/>
<dbReference type="eggNOG" id="COG0774">
    <property type="taxonomic scope" value="Bacteria"/>
</dbReference>
<dbReference type="HOGENOM" id="CLU_046528_1_0_4"/>
<dbReference type="UniPathway" id="UPA00359">
    <property type="reaction ID" value="UER00478"/>
</dbReference>
<dbReference type="Proteomes" id="UP000002429">
    <property type="component" value="Chromosome"/>
</dbReference>
<dbReference type="GO" id="GO:0016020">
    <property type="term" value="C:membrane"/>
    <property type="evidence" value="ECO:0007669"/>
    <property type="project" value="GOC"/>
</dbReference>
<dbReference type="GO" id="GO:0046872">
    <property type="term" value="F:metal ion binding"/>
    <property type="evidence" value="ECO:0007669"/>
    <property type="project" value="UniProtKB-KW"/>
</dbReference>
<dbReference type="GO" id="GO:0103117">
    <property type="term" value="F:UDP-3-O-acyl-N-acetylglucosamine deacetylase activity"/>
    <property type="evidence" value="ECO:0007669"/>
    <property type="project" value="UniProtKB-UniRule"/>
</dbReference>
<dbReference type="GO" id="GO:0009245">
    <property type="term" value="P:lipid A biosynthetic process"/>
    <property type="evidence" value="ECO:0007669"/>
    <property type="project" value="UniProtKB-UniRule"/>
</dbReference>
<dbReference type="Gene3D" id="3.30.230.20">
    <property type="entry name" value="lpxc deacetylase, domain 1"/>
    <property type="match status" value="1"/>
</dbReference>
<dbReference type="Gene3D" id="3.30.1700.10">
    <property type="entry name" value="lpxc deacetylase, domain 2"/>
    <property type="match status" value="1"/>
</dbReference>
<dbReference type="HAMAP" id="MF_00388">
    <property type="entry name" value="LpxC"/>
    <property type="match status" value="1"/>
</dbReference>
<dbReference type="InterPro" id="IPR020568">
    <property type="entry name" value="Ribosomal_Su5_D2-typ_SF"/>
</dbReference>
<dbReference type="InterPro" id="IPR004463">
    <property type="entry name" value="UDP-acyl_GlcNac_deAcase"/>
</dbReference>
<dbReference type="InterPro" id="IPR011334">
    <property type="entry name" value="UDP-acyl_GlcNac_deAcase_C"/>
</dbReference>
<dbReference type="InterPro" id="IPR015870">
    <property type="entry name" value="UDP-acyl_N-AcGlcN_deAcase_N"/>
</dbReference>
<dbReference type="NCBIfam" id="TIGR00325">
    <property type="entry name" value="lpxC"/>
    <property type="match status" value="1"/>
</dbReference>
<dbReference type="PANTHER" id="PTHR33694">
    <property type="entry name" value="UDP-3-O-ACYL-N-ACETYLGLUCOSAMINE DEACETYLASE 1, MITOCHONDRIAL-RELATED"/>
    <property type="match status" value="1"/>
</dbReference>
<dbReference type="PANTHER" id="PTHR33694:SF1">
    <property type="entry name" value="UDP-3-O-ACYL-N-ACETYLGLUCOSAMINE DEACETYLASE 1, MITOCHONDRIAL-RELATED"/>
    <property type="match status" value="1"/>
</dbReference>
<dbReference type="Pfam" id="PF03331">
    <property type="entry name" value="LpxC"/>
    <property type="match status" value="1"/>
</dbReference>
<dbReference type="SUPFAM" id="SSF54211">
    <property type="entry name" value="Ribosomal protein S5 domain 2-like"/>
    <property type="match status" value="2"/>
</dbReference>
<gene>
    <name evidence="1" type="primary">lpxC</name>
    <name type="ordered locus">Rmet_3121</name>
</gene>
<comment type="function">
    <text evidence="1">Catalyzes the hydrolysis of UDP-3-O-myristoyl-N-acetylglucosamine to form UDP-3-O-myristoylglucosamine and acetate, the committed step in lipid A biosynthesis.</text>
</comment>
<comment type="catalytic activity">
    <reaction evidence="1">
        <text>a UDP-3-O-[(3R)-3-hydroxyacyl]-N-acetyl-alpha-D-glucosamine + H2O = a UDP-3-O-[(3R)-3-hydroxyacyl]-alpha-D-glucosamine + acetate</text>
        <dbReference type="Rhea" id="RHEA:67816"/>
        <dbReference type="ChEBI" id="CHEBI:15377"/>
        <dbReference type="ChEBI" id="CHEBI:30089"/>
        <dbReference type="ChEBI" id="CHEBI:137740"/>
        <dbReference type="ChEBI" id="CHEBI:173225"/>
        <dbReference type="EC" id="3.5.1.108"/>
    </reaction>
</comment>
<comment type="cofactor">
    <cofactor evidence="1">
        <name>Zn(2+)</name>
        <dbReference type="ChEBI" id="CHEBI:29105"/>
    </cofactor>
</comment>
<comment type="pathway">
    <text evidence="1">Glycolipid biosynthesis; lipid IV(A) biosynthesis; lipid IV(A) from (3R)-3-hydroxytetradecanoyl-[acyl-carrier-protein] and UDP-N-acetyl-alpha-D-glucosamine: step 2/6.</text>
</comment>
<comment type="similarity">
    <text evidence="1">Belongs to the LpxC family.</text>
</comment>
<keyword id="KW-0378">Hydrolase</keyword>
<keyword id="KW-0441">Lipid A biosynthesis</keyword>
<keyword id="KW-0444">Lipid biosynthesis</keyword>
<keyword id="KW-0443">Lipid metabolism</keyword>
<keyword id="KW-0479">Metal-binding</keyword>
<keyword id="KW-1185">Reference proteome</keyword>
<keyword id="KW-0862">Zinc</keyword>
<name>LPXC_CUPMC</name>
<accession>Q1LIN3</accession>
<feature type="chain" id="PRO_0000253690" description="UDP-3-O-acyl-N-acetylglucosamine deacetylase">
    <location>
        <begin position="1"/>
        <end position="305"/>
    </location>
</feature>
<feature type="active site" description="Proton donor" evidence="1">
    <location>
        <position position="264"/>
    </location>
</feature>
<feature type="binding site" evidence="1">
    <location>
        <position position="78"/>
    </location>
    <ligand>
        <name>Zn(2+)</name>
        <dbReference type="ChEBI" id="CHEBI:29105"/>
    </ligand>
</feature>
<feature type="binding site" evidence="1">
    <location>
        <position position="237"/>
    </location>
    <ligand>
        <name>Zn(2+)</name>
        <dbReference type="ChEBI" id="CHEBI:29105"/>
    </ligand>
</feature>
<feature type="binding site" evidence="1">
    <location>
        <position position="241"/>
    </location>
    <ligand>
        <name>Zn(2+)</name>
        <dbReference type="ChEBI" id="CHEBI:29105"/>
    </ligand>
</feature>